<organism>
    <name type="scientific">Thermotoga sp. (strain RQ2)</name>
    <dbReference type="NCBI Taxonomy" id="126740"/>
    <lineage>
        <taxon>Bacteria</taxon>
        <taxon>Thermotogati</taxon>
        <taxon>Thermotogota</taxon>
        <taxon>Thermotogae</taxon>
        <taxon>Thermotogales</taxon>
        <taxon>Thermotogaceae</taxon>
        <taxon>Thermotoga</taxon>
    </lineage>
</organism>
<accession>B1L9E3</accession>
<protein>
    <recommendedName>
        <fullName evidence="1">Chorismate synthase</fullName>
        <shortName evidence="1">CS</shortName>
        <ecNumber evidence="1">4.2.3.5</ecNumber>
    </recommendedName>
    <alternativeName>
        <fullName evidence="1">5-enolpyruvylshikimate-3-phosphate phospholyase</fullName>
    </alternativeName>
</protein>
<comment type="function">
    <text evidence="1">Catalyzes the anti-1,4-elimination of the C-3 phosphate and the C-6 proR hydrogen from 5-enolpyruvylshikimate-3-phosphate (EPSP) to yield chorismate, which is the branch point compound that serves as the starting substrate for the three terminal pathways of aromatic amino acid biosynthesis. This reaction introduces a second double bond into the aromatic ring system.</text>
</comment>
<comment type="catalytic activity">
    <reaction evidence="1">
        <text>5-O-(1-carboxyvinyl)-3-phosphoshikimate = chorismate + phosphate</text>
        <dbReference type="Rhea" id="RHEA:21020"/>
        <dbReference type="ChEBI" id="CHEBI:29748"/>
        <dbReference type="ChEBI" id="CHEBI:43474"/>
        <dbReference type="ChEBI" id="CHEBI:57701"/>
        <dbReference type="EC" id="4.2.3.5"/>
    </reaction>
</comment>
<comment type="cofactor">
    <cofactor evidence="1">
        <name>FMNH2</name>
        <dbReference type="ChEBI" id="CHEBI:57618"/>
    </cofactor>
    <text evidence="1">Reduced FMN (FMNH(2)).</text>
</comment>
<comment type="pathway">
    <text evidence="1">Metabolic intermediate biosynthesis; chorismate biosynthesis; chorismate from D-erythrose 4-phosphate and phosphoenolpyruvate: step 7/7.</text>
</comment>
<comment type="subunit">
    <text evidence="1">Homotetramer.</text>
</comment>
<comment type="similarity">
    <text evidence="1">Belongs to the chorismate synthase family.</text>
</comment>
<proteinExistence type="inferred from homology"/>
<reference key="1">
    <citation type="journal article" date="2011" name="J. Bacteriol.">
        <title>Genome sequence of Thermotoga sp. strain RQ2, a hyperthermophilic bacterium isolated from a geothermally heated region of the seafloor near Ribeira Quente, the Azores.</title>
        <authorList>
            <person name="Swithers K.S."/>
            <person name="DiPippo J.L."/>
            <person name="Bruce D.C."/>
            <person name="Detter C."/>
            <person name="Tapia R."/>
            <person name="Han S."/>
            <person name="Saunders E."/>
            <person name="Goodwin L.A."/>
            <person name="Han J."/>
            <person name="Woyke T."/>
            <person name="Pitluck S."/>
            <person name="Pennacchio L."/>
            <person name="Nolan M."/>
            <person name="Mikhailova N."/>
            <person name="Lykidis A."/>
            <person name="Land M.L."/>
            <person name="Brettin T."/>
            <person name="Stetter K.O."/>
            <person name="Nelson K.E."/>
            <person name="Gogarten J.P."/>
            <person name="Noll K.M."/>
        </authorList>
    </citation>
    <scope>NUCLEOTIDE SEQUENCE [LARGE SCALE GENOMIC DNA]</scope>
    <source>
        <strain>RQ2</strain>
    </source>
</reference>
<evidence type="ECO:0000255" key="1">
    <source>
        <dbReference type="HAMAP-Rule" id="MF_00300"/>
    </source>
</evidence>
<dbReference type="EC" id="4.2.3.5" evidence="1"/>
<dbReference type="EMBL" id="CP000969">
    <property type="protein sequence ID" value="ACB08941.1"/>
    <property type="molecule type" value="Genomic_DNA"/>
</dbReference>
<dbReference type="RefSeq" id="WP_011943194.1">
    <property type="nucleotide sequence ID" value="NC_010483.1"/>
</dbReference>
<dbReference type="SMR" id="B1L9E3"/>
<dbReference type="KEGG" id="trq:TRQ2_0588"/>
<dbReference type="HOGENOM" id="CLU_034547_2_0_0"/>
<dbReference type="UniPathway" id="UPA00053">
    <property type="reaction ID" value="UER00090"/>
</dbReference>
<dbReference type="Proteomes" id="UP000001687">
    <property type="component" value="Chromosome"/>
</dbReference>
<dbReference type="GO" id="GO:0005829">
    <property type="term" value="C:cytosol"/>
    <property type="evidence" value="ECO:0007669"/>
    <property type="project" value="TreeGrafter"/>
</dbReference>
<dbReference type="GO" id="GO:0004107">
    <property type="term" value="F:chorismate synthase activity"/>
    <property type="evidence" value="ECO:0007669"/>
    <property type="project" value="UniProtKB-UniRule"/>
</dbReference>
<dbReference type="GO" id="GO:0010181">
    <property type="term" value="F:FMN binding"/>
    <property type="evidence" value="ECO:0007669"/>
    <property type="project" value="TreeGrafter"/>
</dbReference>
<dbReference type="GO" id="GO:0008652">
    <property type="term" value="P:amino acid biosynthetic process"/>
    <property type="evidence" value="ECO:0007669"/>
    <property type="project" value="UniProtKB-KW"/>
</dbReference>
<dbReference type="GO" id="GO:0009073">
    <property type="term" value="P:aromatic amino acid family biosynthetic process"/>
    <property type="evidence" value="ECO:0007669"/>
    <property type="project" value="UniProtKB-KW"/>
</dbReference>
<dbReference type="GO" id="GO:0009423">
    <property type="term" value="P:chorismate biosynthetic process"/>
    <property type="evidence" value="ECO:0007669"/>
    <property type="project" value="UniProtKB-UniRule"/>
</dbReference>
<dbReference type="FunFam" id="3.60.150.10:FF:000002">
    <property type="entry name" value="Chorismate synthase"/>
    <property type="match status" value="1"/>
</dbReference>
<dbReference type="Gene3D" id="3.60.150.10">
    <property type="entry name" value="Chorismate synthase AroC"/>
    <property type="match status" value="1"/>
</dbReference>
<dbReference type="HAMAP" id="MF_00300">
    <property type="entry name" value="Chorismate_synth"/>
    <property type="match status" value="1"/>
</dbReference>
<dbReference type="InterPro" id="IPR000453">
    <property type="entry name" value="Chorismate_synth"/>
</dbReference>
<dbReference type="InterPro" id="IPR035904">
    <property type="entry name" value="Chorismate_synth_AroC_sf"/>
</dbReference>
<dbReference type="InterPro" id="IPR020541">
    <property type="entry name" value="Chorismate_synthase_CS"/>
</dbReference>
<dbReference type="NCBIfam" id="TIGR00033">
    <property type="entry name" value="aroC"/>
    <property type="match status" value="1"/>
</dbReference>
<dbReference type="NCBIfam" id="NF003793">
    <property type="entry name" value="PRK05382.1"/>
    <property type="match status" value="1"/>
</dbReference>
<dbReference type="PANTHER" id="PTHR21085">
    <property type="entry name" value="CHORISMATE SYNTHASE"/>
    <property type="match status" value="1"/>
</dbReference>
<dbReference type="PANTHER" id="PTHR21085:SF0">
    <property type="entry name" value="CHORISMATE SYNTHASE"/>
    <property type="match status" value="1"/>
</dbReference>
<dbReference type="Pfam" id="PF01264">
    <property type="entry name" value="Chorismate_synt"/>
    <property type="match status" value="1"/>
</dbReference>
<dbReference type="PIRSF" id="PIRSF001456">
    <property type="entry name" value="Chorismate_synth"/>
    <property type="match status" value="1"/>
</dbReference>
<dbReference type="SUPFAM" id="SSF103263">
    <property type="entry name" value="Chorismate synthase, AroC"/>
    <property type="match status" value="1"/>
</dbReference>
<dbReference type="PROSITE" id="PS00787">
    <property type="entry name" value="CHORISMATE_SYNTHASE_1"/>
    <property type="match status" value="1"/>
</dbReference>
<dbReference type="PROSITE" id="PS00788">
    <property type="entry name" value="CHORISMATE_SYNTHASE_2"/>
    <property type="match status" value="1"/>
</dbReference>
<dbReference type="PROSITE" id="PS00789">
    <property type="entry name" value="CHORISMATE_SYNTHASE_3"/>
    <property type="match status" value="1"/>
</dbReference>
<name>AROC_THESQ</name>
<keyword id="KW-0028">Amino-acid biosynthesis</keyword>
<keyword id="KW-0057">Aromatic amino acid biosynthesis</keyword>
<keyword id="KW-0274">FAD</keyword>
<keyword id="KW-0285">Flavoprotein</keyword>
<keyword id="KW-0288">FMN</keyword>
<keyword id="KW-0456">Lyase</keyword>
<keyword id="KW-0521">NADP</keyword>
<feature type="chain" id="PRO_0000405972" description="Chorismate synthase">
    <location>
        <begin position="1"/>
        <end position="376"/>
    </location>
</feature>
<feature type="binding site" evidence="1">
    <location>
        <position position="39"/>
    </location>
    <ligand>
        <name>NADP(+)</name>
        <dbReference type="ChEBI" id="CHEBI:58349"/>
    </ligand>
</feature>
<feature type="binding site" evidence="1">
    <location>
        <position position="45"/>
    </location>
    <ligand>
        <name>NADP(+)</name>
        <dbReference type="ChEBI" id="CHEBI:58349"/>
    </ligand>
</feature>
<feature type="binding site" evidence="1">
    <location>
        <begin position="115"/>
        <end position="117"/>
    </location>
    <ligand>
        <name>FMN</name>
        <dbReference type="ChEBI" id="CHEBI:58210"/>
    </ligand>
</feature>
<feature type="binding site" evidence="1">
    <location>
        <position position="276"/>
    </location>
    <ligand>
        <name>FMN</name>
        <dbReference type="ChEBI" id="CHEBI:58210"/>
    </ligand>
</feature>
<feature type="binding site" evidence="1">
    <location>
        <begin position="291"/>
        <end position="295"/>
    </location>
    <ligand>
        <name>FMN</name>
        <dbReference type="ChEBI" id="CHEBI:58210"/>
    </ligand>
</feature>
<feature type="binding site" evidence="1">
    <location>
        <position position="317"/>
    </location>
    <ligand>
        <name>FMN</name>
        <dbReference type="ChEBI" id="CHEBI:58210"/>
    </ligand>
</feature>
<sequence length="376" mass="41564">MRLTIAGDSHGKYMIAVLEGIPAGLKIDEEIIRRELFRRRNCYGRGKRMSMEEDAFEIVSGVWGGITTGAPVTILVPNKAGNPVKDVRSVPRPGHIDYAAFVKYKLPDLNVYVERSSARWTVALTAAGALLKSLLREFNIDVLGFVTRLGNVEAKNIPDNFEELRRKRDESAVFCPDPEATEGMISEIDRAKEEGNTLGGKVKVIARGVPAGIGSYSDLFKKLDSKIGSLFFAIPAVKGVVIGSEEMWYGFDYLDEFELEDGRIKRRTNNLGGIEGGITNGEDVWVNVFVKPIPTTGKPLNSVDLRTMEPAKTPYVRSDVTAVPPASVVCEAALAVVISDALLEHLGDGNIDDLKRRFGNENLPRWDDGFWKEYDR</sequence>
<gene>
    <name evidence="1" type="primary">aroC</name>
    <name type="ordered locus">TRQ2_0588</name>
</gene>